<proteinExistence type="evidence at protein level"/>
<protein>
    <recommendedName>
        <fullName>Transforming growth factor beta-1 proprotein</fullName>
    </recommendedName>
    <component>
        <recommendedName>
            <fullName evidence="1">Latency-associated peptide</fullName>
            <shortName>LAP</shortName>
        </recommendedName>
    </component>
    <component>
        <recommendedName>
            <fullName evidence="1">Transforming growth factor beta-1</fullName>
            <shortName>TGF-beta-1</shortName>
        </recommendedName>
    </component>
</protein>
<reference key="1">
    <citation type="journal article" date="1986" name="J. Biol. Chem.">
        <title>The murine transforming growth factor-beta precursor.</title>
        <authorList>
            <person name="Derynck R."/>
            <person name="Jarrett J.A."/>
            <person name="Chen E.Y."/>
            <person name="Goeddel D.V."/>
        </authorList>
    </citation>
    <scope>NUCLEOTIDE SEQUENCE [MRNA]</scope>
</reference>
<reference key="2">
    <citation type="journal article" date="1995" name="Gene">
        <title>Molecular organization of the gene encoding murine transforming growth factor beta 1.</title>
        <authorList>
            <person name="Guron C."/>
            <person name="Sudarshan C."/>
            <person name="Raghow R."/>
        </authorList>
    </citation>
    <scope>NUCLEOTIDE SEQUENCE [GENOMIC DNA]</scope>
    <source>
        <strain>BALB/cJ</strain>
    </source>
</reference>
<reference key="3">
    <citation type="submission" date="1998-08" db="EMBL/GenBank/DDBJ databases">
        <title>Transforming growth factor-beta 1 sequence and expression: no difference between NOD/Lt and C57Bl/6 mouse strains.</title>
        <authorList>
            <person name="Poirot L."/>
            <person name="Benoist C."/>
            <person name="Mathis D."/>
        </authorList>
    </citation>
    <scope>NUCLEOTIDE SEQUENCE [MRNA]</scope>
    <source>
        <strain>C57BL/6J</strain>
        <strain>NOD/LT</strain>
        <tissue>Spleen</tissue>
    </source>
</reference>
<reference key="4">
    <citation type="journal article" date="2004" name="Genome Res.">
        <title>The status, quality, and expansion of the NIH full-length cDNA project: the Mammalian Gene Collection (MGC).</title>
        <authorList>
            <consortium name="The MGC Project Team"/>
        </authorList>
    </citation>
    <scope>NUCLEOTIDE SEQUENCE [LARGE SCALE MRNA]</scope>
    <source>
        <strain>FVB/N</strain>
        <tissue>Mammary tumor</tissue>
    </source>
</reference>
<reference key="5">
    <citation type="journal article" date="1999" name="Cell">
        <title>The integrin alpha v beta 6 binds and activates latent TGF beta 1: a mechanism for regulating pulmonary inflammation and fibrosis.</title>
        <authorList>
            <person name="Munger J.S."/>
            <person name="Huang X."/>
            <person name="Kawakatsu H."/>
            <person name="Griffiths M.J."/>
            <person name="Dalton S.L."/>
            <person name="Wu J."/>
            <person name="Pittet J.F."/>
            <person name="Kaminski N."/>
            <person name="Garat C."/>
            <person name="Matthay M.A."/>
            <person name="Rifkin D.B."/>
            <person name="Sheppard D."/>
        </authorList>
    </citation>
    <scope>FUNCTION</scope>
    <scope>INTERACTION WITH ITGAV AND ITGB6</scope>
</reference>
<reference key="6">
    <citation type="journal article" date="2004" name="Biochem. Biophys. Res. Commun.">
        <title>P311 binds to the latency associated protein and downregulates the expression of TGF-beta1 and TGF-beta2.</title>
        <authorList>
            <person name="Paliwal S."/>
            <person name="Shi J."/>
            <person name="Dhru U."/>
            <person name="Zhou Y."/>
            <person name="Schuger L."/>
        </authorList>
    </citation>
    <scope>INTERACTION WITH NREP</scope>
</reference>
<reference key="7">
    <citation type="journal article" date="2004" name="Dev. Growth Differ.">
        <title>Developmentally regulated expression of mouse HtrA3 and its role as an inhibitor of TGF-beta signaling.</title>
        <authorList>
            <person name="Tocharus J."/>
            <person name="Tsuchiya A."/>
            <person name="Kajikawa M."/>
            <person name="Ueta Y."/>
            <person name="Oka C."/>
            <person name="Kawaichi M."/>
        </authorList>
    </citation>
    <scope>INTERACTION WITH HTRA3</scope>
</reference>
<reference key="8">
    <citation type="journal article" date="2004" name="Development">
        <title>HtrA1 serine protease inhibits signaling mediated by Tgfbeta family proteins.</title>
        <authorList>
            <person name="Oka C."/>
            <person name="Tsujimoto R."/>
            <person name="Kajikawa M."/>
            <person name="Koshiba-Takeuchi K."/>
            <person name="Ina J."/>
            <person name="Yano M."/>
            <person name="Tsuchiya A."/>
            <person name="Ueta Y."/>
            <person name="Soma A."/>
            <person name="Kanda H."/>
            <person name="Matsumoto M."/>
            <person name="Kawaichi M."/>
        </authorList>
    </citation>
    <scope>INTERACTION WITH HTRA1</scope>
</reference>
<reference key="9">
    <citation type="journal article" date="2008" name="Nature">
        <title>TGF-beta-induced Foxp3 inhibits T(H)17 cell differentiation by antagonizing RORgammat function.</title>
        <authorList>
            <person name="Zhou L."/>
            <person name="Lopes J.E."/>
            <person name="Chong M.M."/>
            <person name="Ivanov I.I."/>
            <person name="Min R."/>
            <person name="Victora G.D."/>
            <person name="Shen Y."/>
            <person name="Du J."/>
            <person name="Rubtsov Y.P."/>
            <person name="Rudensky A.Y."/>
            <person name="Ziegler S.F."/>
            <person name="Littman D.R."/>
        </authorList>
    </citation>
    <scope>FUNCTION</scope>
</reference>
<reference key="10">
    <citation type="journal article" date="2010" name="Cell">
        <title>A tissue-specific atlas of mouse protein phosphorylation and expression.</title>
        <authorList>
            <person name="Huttlin E.L."/>
            <person name="Jedrychowski M.P."/>
            <person name="Elias J.E."/>
            <person name="Goswami T."/>
            <person name="Rad R."/>
            <person name="Beausoleil S.A."/>
            <person name="Villen J."/>
            <person name="Haas W."/>
            <person name="Sowa M.E."/>
            <person name="Gygi S.P."/>
        </authorList>
    </citation>
    <scope>IDENTIFICATION BY MASS SPECTROMETRY [LARGE SCALE ANALYSIS]</scope>
    <source>
        <tissue>Spleen</tissue>
        <tissue>Testis</tissue>
    </source>
</reference>
<reference key="11">
    <citation type="journal article" date="2010" name="Cell Death Differ.">
        <title>TSC-22D1 isoforms have opposing roles in mammary epithelial cell survival.</title>
        <authorList>
            <person name="Huser C.A."/>
            <person name="Pringle M.A."/>
            <person name="Heath V.J."/>
            <person name="Bell A.K."/>
            <person name="Kendrick H."/>
            <person name="Smalley M.J."/>
            <person name="Crighton D."/>
            <person name="Ryan K.M."/>
            <person name="Gusterson B.A."/>
            <person name="Stein T."/>
        </authorList>
    </citation>
    <scope>TISSUE SPECIFICITY</scope>
</reference>
<reference key="12">
    <citation type="journal article" date="2011" name="J. Biol. Chem.">
        <title>ADAMTSL6beta protein rescues fibrillin-1 microfibril disorder in a Marfan syndrome mouse model through the promotion of fibrillin-1 assembly.</title>
        <authorList>
            <person name="Saito M."/>
            <person name="Kurokawa M."/>
            <person name="Oda M."/>
            <person name="Oshima M."/>
            <person name="Tsutsui K."/>
            <person name="Kosaka K."/>
            <person name="Nakao K."/>
            <person name="Ogawa M."/>
            <person name="Manabe R."/>
            <person name="Suda N."/>
            <person name="Ganjargal G."/>
            <person name="Hada Y."/>
            <person name="Noguchi T."/>
            <person name="Teranaka T."/>
            <person name="Sekiguchi K."/>
            <person name="Yoneda T."/>
            <person name="Tsuji T."/>
        </authorList>
    </citation>
    <scope>INTERACTION WITH THSD4</scope>
</reference>
<reference key="13">
    <citation type="journal article" date="2012" name="Cell. Signal.">
        <title>Protein phosphatase 5 modulates SMAD3 function in the transforming growth factor-beta pathway.</title>
        <authorList>
            <person name="Bruce D.L."/>
            <person name="Macartney T."/>
            <person name="Yong W."/>
            <person name="Shou W."/>
            <person name="Sapkota G.P."/>
        </authorList>
    </citation>
    <scope>FUNCTION</scope>
</reference>
<reference key="14">
    <citation type="journal article" date="2012" name="Dev. Biol.">
        <title>Tsukushi controls the hair cycle by regulating TGF-beta1 signaling.</title>
        <authorList>
            <person name="Niimori D."/>
            <person name="Kawano R."/>
            <person name="Felemban A."/>
            <person name="Niimori-Kita K."/>
            <person name="Tanaka H."/>
            <person name="Ihn H."/>
            <person name="Ohta K."/>
        </authorList>
    </citation>
    <scope>INTERACTION WITH TSKU</scope>
</reference>
<reference key="15">
    <citation type="journal article" date="2016" name="J. Cell Biol.">
        <title>Plakophilin-2 loss promotes TGF-beta1/p38 MAPK-dependent fibrotic gene expression in cardiomyocytes.</title>
        <authorList>
            <person name="Dubash A.D."/>
            <person name="Kam C.Y."/>
            <person name="Aguado B.A."/>
            <person name="Patel D.M."/>
            <person name="Delmar M."/>
            <person name="Shea L.D."/>
            <person name="Green K.J."/>
        </authorList>
    </citation>
    <scope>TISSUE SPECIFICITY</scope>
</reference>
<reference key="16">
    <citation type="journal article" date="2018" name="Cell">
        <title>A milieu molecule for TGF-beta required for microglia function in the nervous system.</title>
        <authorList>
            <person name="Qin Y."/>
            <person name="Garrison B.S."/>
            <person name="Ma W."/>
            <person name="Wang R."/>
            <person name="Jiang A."/>
            <person name="Li J."/>
            <person name="Mistry M."/>
            <person name="Bronson R.T."/>
            <person name="Santoro D."/>
            <person name="Franco C."/>
            <person name="Robinton D.A."/>
            <person name="Stevens B."/>
            <person name="Rossi D.J."/>
            <person name="Lu C."/>
            <person name="Springer T.A."/>
        </authorList>
    </citation>
    <scope>FUNCTION</scope>
    <scope>INTERACTION WITH NRROS</scope>
</reference>
<reference key="17">
    <citation type="journal article" date="2021" name="Biochem. Biophys. Res. Commun.">
        <title>Effects of transforming growth factor-beta1 on odontoblastic differentiation in dental papilla cells is determined by IPO7 expression level.</title>
        <authorList>
            <person name="Zhang Y."/>
            <person name="Zhang H."/>
            <person name="Yuan G."/>
            <person name="Yang G."/>
        </authorList>
    </citation>
    <scope>FUNCTION</scope>
</reference>
<name>TGFB1_MOUSE</name>
<sequence>MPPSGLRLLPLLLPLPWLLVLTPGRPAAGLSTCKTIDMELVKRKRIEAIRGQILSKLRLASPPSQGEVPPGPLPEAVLALYNSTRDRVAGESADPEPEPEADYYAKEVTRVLMVDRNNAIYEKTKDISHSIYMFFNTSDIREAVPEPPLLSRAELRLQRLKSSVEQHVELYQKYSNNSWRYLGNRLLTPTDTPEWLSFDVTGVVRQWLNQGDGIQGFRFSAHCSCDSKDNKLHVEINGISPKRRGDLGTIHDMNRPFLLLMATPLERAQHLHSSRHRRALDTNYCFSSTEKNCCVRQLYIDFRKDLGWKWIHEPKGYHANFCLGPCPYIWSLDTQYSKVLALYNQHNPGASASPCCVPQALEPLPIVYYVGRKPKVEQLSNMIVRSCKCS</sequence>
<comment type="function">
    <text evidence="1">Transforming growth factor beta-1 proprotein: Precursor of the Latency-associated peptide (LAP) and Transforming growth factor beta-1 (TGF-beta-1) chains, which constitute the regulatory and active subunit of TGF-beta-1, respectively.</text>
</comment>
<comment type="function">
    <molecule>Latency-associated peptide</molecule>
    <text evidence="1 4 14">Required to maintain the Transforming growth factor beta-1 (TGF-beta-1) chain in a latent state during storage in extracellular matrix (PubMed:29909984). Associates non-covalently with TGF-beta-1 and regulates its activation via interaction with 'milieu molecules', such as LTBP1, LRRC32/GARP and LRRC33/NRROS, that control activation of TGF-beta-1 (PubMed:29909984). Interaction with LRRC33/NRROS regulates activation of TGF-beta-1 in macrophages and microglia (PubMed:29909984). Interaction with LRRC32/GARP controls activation of TGF-beta-1 on the surface of activated regulatory T-cells (Tregs) (By similarity). Interaction with integrins (ITGAV:ITGB6 or ITGAV:ITGB8) results in distortion of the Latency-associated peptide chain and subsequent release of the active TGF-beta-1 (PubMed:10025398).</text>
</comment>
<comment type="function">
    <molecule>Transforming growth factor beta-1</molecule>
    <text evidence="1 4 8 11 14 15">Multifunctional protein that regulates the growth and differentiation of various cell types and is involved in various processes, such as normal development, immune function, microglia function and responses to neurodegeneration (PubMed:22781750, PubMed:29909984). Activation into mature form follows different steps: following cleavage of the proprotein in the Golgi apparatus, Latency-associated peptide (LAP) and Transforming growth factor beta-1 (TGF-beta-1) chains remain non-covalently linked rendering TGF-beta-1 inactive during storage in extracellular matrix (By similarity). At the same time, LAP chain interacts with 'milieu molecules', such as LTBP1, LRRC32/GARP and LRRC33/NRROS that control activation of TGF-beta-1 and maintain it in a latent state during storage in extracellular milieus (PubMed:29909984). TGF-beta-1 is released from LAP by integrins (ITGAV:ITGB6 or ITGAV:ITGB8): integrin-binding to LAP stabilizes an alternative conformation of the LAP bowtie tail and results in distortion of the LAP chain and subsequent release of the active TGF-beta-1 (By similarity) (PubMed:10025398). Once activated following release of LAP, TGF-beta-1 acts by binding to TGF-beta receptors (TGFBR1 and TGFBR2), which transduce signal (By similarity). While expressed by many cells types, TGF-beta-1 only has a very localized range of action within cell environment thanks to fine regulation of its activation by Latency-associated peptide chain (LAP) and 'milieu molecules' (PubMed:29909984). Plays an important role in bone remodeling: acts as a potent stimulator of osteoblastic bone formation, causing chemotaxis, proliferation and differentiation in committed osteoblasts (PubMed:22781750). Can promote either T-helper 17 cells (Th17) or regulatory T-cells (Treg) lineage differentiation in a concentration-dependent manner (PubMed:18368049). At high concentrations, leads to FOXP3-mediated suppression of RORC and down-regulation of IL-17 expression, favoring Treg cell development (PubMed:18368049). At low concentrations in concert with IL-6 and IL-21, leads to expression of the IL-17 and IL-23 receptors, favoring differentiation to Th17 cells (PubMed:18368049). Stimulates sustained production of collagen through the activation of CREB3L1 by regulated intramembrane proteolysis (RIP) (By similarity). Mediates SMAD2/3 activation by inducing its phosphorylation and subsequent translocation to the nucleus. Positively regulates odontoblastic differentiation in dental papilla cells, via promotion of IPO7-mediated translocation of phosphorylated SMAD2 to the nucleus and subsequent transcription of target genes (PubMed:33548622). Can induce epithelial-to-mesenchymal transition (EMT) and cell migration in various cell types (By similarity).</text>
</comment>
<comment type="subunit">
    <text evidence="1 5 7 10 12">Homodimer; disulfide-linked (By similarity). Interacts with the serine proteases, HTRA1 and HTRA3: the interaction with either inhibits TGFB1-mediated signaling and the HTRA protease activity is required for this inhibition (PubMed:14973287, PubMed:15206957). May interact with THSD4; this interaction may lead to sequestration by FBN1 microfibril assembly and attenuation of TGFB signaling (PubMed:21880733). Interacts with CD109, DPT and ASPN. Interacts with EFEMP2 (By similarity). Interacts with TSKU; the interaction contributes to regulation of the hair cycle (PubMed:22995554). Interacts with TGFBR3 (By similarity).</text>
</comment>
<comment type="subunit">
    <molecule>Latency-associated peptide</molecule>
    <text evidence="1 4 6 14">Homodimer; disulfide-linked (By similarity). Interacts with transforming growth factor beta-1 (TGF-beta-1) chain; interaction is non-covalent and maintains TGF-beta-1 in a latent state; each latency-associated peptide (LAP) monomer interacts with TGF-beta-1 in the other monomer (By similarity). Interacts with LTBP1; leading to regulation of TGF-beta-1 activation (By similarity). Interacts with LRRC32/GARP; leading to regulation of TGF-beta-1 activation on the surface of activated regulatory T-cells (Tregs) (By similarity). Interacts with LRRC33/NRROS; leading to regulation of TGF-beta-1 activation in macrophages and microglia (PubMed:29909984). Interacts (via cell attachment site) with integrins ITGAV and ITGB6 (ITGAV:ITGB6), leading to release of the active TGF-beta-1 (PubMed:10025398). Interacts with NREP; the interaction results in a decrease in TGFB1 autoinduction (PubMed:14985127). Interacts with HSP90AB1; inhibits latent TGFB1 activation.</text>
</comment>
<comment type="subunit">
    <molecule>Transforming growth factor beta-1</molecule>
    <text evidence="1">Homodimer; disulfide-linked. Interacts with TGF-beta receptors (TGFBR1 and TGFBR2), leading to signal transduction.</text>
</comment>
<comment type="subcellular location">
    <molecule>Latency-associated peptide</molecule>
    <subcellularLocation>
        <location evidence="1">Secreted</location>
        <location evidence="1">Extracellular space</location>
        <location evidence="1">Extracellular matrix</location>
    </subcellularLocation>
</comment>
<comment type="subcellular location">
    <molecule>Transforming growth factor beta-1</molecule>
    <subcellularLocation>
        <location evidence="1">Secreted</location>
    </subcellularLocation>
</comment>
<comment type="tissue specificity">
    <text evidence="9 13">Expressed in cardiomyocytes (PubMed:26858265). Weakly expressed in the mammary glands, with a slight increase of expression following onset of involution (PubMed:19745830).</text>
</comment>
<comment type="domain">
    <molecule>Latency-associated peptide</molecule>
    <text evidence="2">The 'straitjacket' and 'arm' domains encircle the Transforming growth factor beta-1 (TGF-beta-1) monomers and are fastened together by strong bonding between Lys-56 and Tyr-103/Tyr-104.</text>
</comment>
<comment type="domain">
    <molecule>Latency-associated peptide</molecule>
    <text evidence="1">The cell attachment site motif mediates binding to integrins (ITGAV:ITGB6 or ITGAV:ITGB8). The motif locates to a long loop in the arm domain called the bowtie tail. Integrin-binding stabilizes an alternative conformation of the bowtie tail. Activation by integrin requires force application by the actin cytoskeleton, which is resisted by the 'milieu molecules' (such as LTBP1, LRRC32/GARP and/or LRRC33/NRROS), resulting in distortion of the prodomain and release of the active TGF-beta-1.</text>
</comment>
<comment type="PTM">
    <text evidence="1">Transforming growth factor beta-1 proprotein: The precursor proprotein is cleaved in the Golgi apparatus by FURIN to form Transforming growth factor beta-1 (TGF-beta-1) and Latency-associated peptide (LAP) chains, which remain non-covalently linked, rendering TGF-beta-1 inactive.</text>
</comment>
<comment type="PTM">
    <molecule>Latency-associated peptide</molecule>
    <text evidence="1">N-glycosylated. Deglycosylation leads to activation of Transforming growth factor beta-1 (TGF-beta-1); mechanisms triggering deglycosylation-driven activation of TGF-beta-1 are however unclear.</text>
</comment>
<comment type="similarity">
    <text evidence="16">Belongs to the TGF-beta family.</text>
</comment>
<evidence type="ECO:0000250" key="1">
    <source>
        <dbReference type="UniProtKB" id="P01137"/>
    </source>
</evidence>
<evidence type="ECO:0000250" key="2">
    <source>
        <dbReference type="UniProtKB" id="P07200"/>
    </source>
</evidence>
<evidence type="ECO:0000255" key="3"/>
<evidence type="ECO:0000269" key="4">
    <source>
    </source>
</evidence>
<evidence type="ECO:0000269" key="5">
    <source>
    </source>
</evidence>
<evidence type="ECO:0000269" key="6">
    <source>
    </source>
</evidence>
<evidence type="ECO:0000269" key="7">
    <source>
    </source>
</evidence>
<evidence type="ECO:0000269" key="8">
    <source>
    </source>
</evidence>
<evidence type="ECO:0000269" key="9">
    <source>
    </source>
</evidence>
<evidence type="ECO:0000269" key="10">
    <source>
    </source>
</evidence>
<evidence type="ECO:0000269" key="11">
    <source>
    </source>
</evidence>
<evidence type="ECO:0000269" key="12">
    <source>
    </source>
</evidence>
<evidence type="ECO:0000269" key="13">
    <source>
    </source>
</evidence>
<evidence type="ECO:0000269" key="14">
    <source>
    </source>
</evidence>
<evidence type="ECO:0000269" key="15">
    <source>
    </source>
</evidence>
<evidence type="ECO:0000305" key="16"/>
<evidence type="ECO:0000312" key="17">
    <source>
        <dbReference type="MGI" id="MGI:98725"/>
    </source>
</evidence>
<feature type="signal peptide" evidence="1">
    <location>
        <begin position="1"/>
        <end position="29"/>
    </location>
</feature>
<feature type="chain" id="PRO_0000033766" description="Latency-associated peptide" evidence="1">
    <location>
        <begin position="30"/>
        <end position="278"/>
    </location>
</feature>
<feature type="chain" id="PRO_0000033767" description="Transforming growth factor beta-1" evidence="1">
    <location>
        <begin position="279"/>
        <end position="390"/>
    </location>
</feature>
<feature type="region of interest" description="Straightjacket domain" evidence="2">
    <location>
        <begin position="30"/>
        <end position="74"/>
    </location>
</feature>
<feature type="region of interest" description="Arm domain" evidence="2">
    <location>
        <begin position="75"/>
        <end position="271"/>
    </location>
</feature>
<feature type="region of interest" description="Bowtie tail" evidence="1">
    <location>
        <begin position="226"/>
        <end position="252"/>
    </location>
</feature>
<feature type="short sequence motif" description="Cell attachment site" evidence="3">
    <location>
        <begin position="244"/>
        <end position="246"/>
    </location>
</feature>
<feature type="site" description="Cleavage; by FURIN" evidence="1">
    <location>
        <begin position="278"/>
        <end position="279"/>
    </location>
</feature>
<feature type="glycosylation site" description="N-linked (GlcNAc...) asparagine" evidence="3">
    <location>
        <position position="82"/>
    </location>
</feature>
<feature type="glycosylation site" description="N-linked (GlcNAc...) asparagine" evidence="3">
    <location>
        <position position="136"/>
    </location>
</feature>
<feature type="glycosylation site" description="N-linked (GlcNAc...) asparagine" evidence="3">
    <location>
        <position position="176"/>
    </location>
</feature>
<feature type="disulfide bond" description="Interchain (with C-1359 or C-1384 in LTBP1); in inactive form" evidence="2">
    <location>
        <position position="33"/>
    </location>
</feature>
<feature type="disulfide bond" description="Interchain (with C-225)" evidence="1">
    <location>
        <position position="223"/>
    </location>
</feature>
<feature type="disulfide bond" description="Interchain (with C-223)" evidence="1">
    <location>
        <position position="225"/>
    </location>
</feature>
<feature type="disulfide bond" evidence="1">
    <location>
        <begin position="285"/>
        <end position="294"/>
    </location>
</feature>
<feature type="disulfide bond" evidence="1">
    <location>
        <begin position="293"/>
        <end position="356"/>
    </location>
</feature>
<feature type="disulfide bond" evidence="1">
    <location>
        <begin position="322"/>
        <end position="387"/>
    </location>
</feature>
<feature type="disulfide bond" evidence="1">
    <location>
        <begin position="326"/>
        <end position="389"/>
    </location>
</feature>
<feature type="disulfide bond" description="Interchain" evidence="1">
    <location>
        <position position="355"/>
    </location>
</feature>
<dbReference type="EMBL" id="M13177">
    <property type="protein sequence ID" value="AAA40423.1"/>
    <property type="molecule type" value="mRNA"/>
</dbReference>
<dbReference type="EMBL" id="L42462">
    <property type="protein sequence ID" value="AAB00138.1"/>
    <property type="molecule type" value="Genomic_DNA"/>
</dbReference>
<dbReference type="EMBL" id="L42456">
    <property type="protein sequence ID" value="AAB00138.1"/>
    <property type="status" value="JOINED"/>
    <property type="molecule type" value="Genomic_DNA"/>
</dbReference>
<dbReference type="EMBL" id="L42457">
    <property type="protein sequence ID" value="AAB00138.1"/>
    <property type="status" value="JOINED"/>
    <property type="molecule type" value="Genomic_DNA"/>
</dbReference>
<dbReference type="EMBL" id="L42458">
    <property type="protein sequence ID" value="AAB00138.1"/>
    <property type="status" value="JOINED"/>
    <property type="molecule type" value="Genomic_DNA"/>
</dbReference>
<dbReference type="EMBL" id="L42459">
    <property type="protein sequence ID" value="AAB00138.1"/>
    <property type="status" value="JOINED"/>
    <property type="molecule type" value="Genomic_DNA"/>
</dbReference>
<dbReference type="EMBL" id="L42460">
    <property type="protein sequence ID" value="AAB00138.1"/>
    <property type="status" value="JOINED"/>
    <property type="molecule type" value="Genomic_DNA"/>
</dbReference>
<dbReference type="EMBL" id="L42461">
    <property type="protein sequence ID" value="AAB00138.1"/>
    <property type="status" value="JOINED"/>
    <property type="molecule type" value="Genomic_DNA"/>
</dbReference>
<dbReference type="EMBL" id="AJ009862">
    <property type="protein sequence ID" value="CAA08900.1"/>
    <property type="molecule type" value="mRNA"/>
</dbReference>
<dbReference type="EMBL" id="BC013738">
    <property type="protein sequence ID" value="AAH13738.1"/>
    <property type="molecule type" value="mRNA"/>
</dbReference>
<dbReference type="CCDS" id="CCDS20993.1"/>
<dbReference type="PIR" id="A01396">
    <property type="entry name" value="WFMS2"/>
</dbReference>
<dbReference type="RefSeq" id="NP_035707.1">
    <property type="nucleotide sequence ID" value="NM_011577.2"/>
</dbReference>
<dbReference type="SMR" id="P04202"/>
<dbReference type="BioGRID" id="204157">
    <property type="interactions" value="6"/>
</dbReference>
<dbReference type="ComplexPortal" id="CPX-821">
    <property type="entry name" value="TGF-beta-1 complex"/>
</dbReference>
<dbReference type="ComplexPortal" id="CPX-823">
    <property type="entry name" value="TGF-beta-1-TGFR complex"/>
</dbReference>
<dbReference type="DIP" id="DIP-48640N"/>
<dbReference type="FunCoup" id="P04202">
    <property type="interactions" value="1059"/>
</dbReference>
<dbReference type="IntAct" id="P04202">
    <property type="interactions" value="1"/>
</dbReference>
<dbReference type="STRING" id="10090.ENSMUSP00000002678"/>
<dbReference type="ChEMBL" id="CHEMBL4295696"/>
<dbReference type="GlyCosmos" id="P04202">
    <property type="glycosylation" value="3 sites, No reported glycans"/>
</dbReference>
<dbReference type="GlyGen" id="P04202">
    <property type="glycosylation" value="3 sites, 1 N-linked glycan (2 sites)"/>
</dbReference>
<dbReference type="iPTMnet" id="P04202"/>
<dbReference type="PhosphoSitePlus" id="P04202"/>
<dbReference type="CPTAC" id="non-CPTAC-3952"/>
<dbReference type="jPOST" id="P04202"/>
<dbReference type="PaxDb" id="10090-ENSMUSP00000002678"/>
<dbReference type="PeptideAtlas" id="P04202"/>
<dbReference type="ProteomicsDB" id="263039"/>
<dbReference type="Pumba" id="P04202"/>
<dbReference type="Antibodypedia" id="4372">
    <property type="antibodies" value="1849 antibodies from 45 providers"/>
</dbReference>
<dbReference type="DNASU" id="21803"/>
<dbReference type="Ensembl" id="ENSMUST00000002678.10">
    <property type="protein sequence ID" value="ENSMUSP00000002678.10"/>
    <property type="gene ID" value="ENSMUSG00000002603.16"/>
</dbReference>
<dbReference type="GeneID" id="21803"/>
<dbReference type="KEGG" id="mmu:21803"/>
<dbReference type="UCSC" id="uc009ftq.1">
    <property type="organism name" value="mouse"/>
</dbReference>
<dbReference type="AGR" id="MGI:98725"/>
<dbReference type="CTD" id="7040"/>
<dbReference type="MGI" id="MGI:98725">
    <property type="gene designation" value="Tgfb1"/>
</dbReference>
<dbReference type="VEuPathDB" id="HostDB:ENSMUSG00000002603"/>
<dbReference type="eggNOG" id="KOG3900">
    <property type="taxonomic scope" value="Eukaryota"/>
</dbReference>
<dbReference type="GeneTree" id="ENSGT00940000160457"/>
<dbReference type="HOGENOM" id="CLU_039840_0_0_1"/>
<dbReference type="InParanoid" id="P04202"/>
<dbReference type="OMA" id="SHNCCLK"/>
<dbReference type="OrthoDB" id="8863549at2759"/>
<dbReference type="PhylomeDB" id="P04202"/>
<dbReference type="TreeFam" id="TF318514"/>
<dbReference type="Reactome" id="R-MMU-114608">
    <property type="pathway name" value="Platelet degranulation"/>
</dbReference>
<dbReference type="Reactome" id="R-MMU-202733">
    <property type="pathway name" value="Cell surface interactions at the vascular wall"/>
</dbReference>
<dbReference type="Reactome" id="R-MMU-2129379">
    <property type="pathway name" value="Molecules associated with elastic fibres"/>
</dbReference>
<dbReference type="Reactome" id="R-MMU-2173788">
    <property type="pathway name" value="Downregulation of TGF-beta receptor signaling"/>
</dbReference>
<dbReference type="Reactome" id="R-MMU-2173789">
    <property type="pathway name" value="TGF-beta receptor signaling activates SMADs"/>
</dbReference>
<dbReference type="Reactome" id="R-MMU-2173791">
    <property type="pathway name" value="TGF-beta receptor signaling in EMT (epithelial to mesenchymal transition)"/>
</dbReference>
<dbReference type="Reactome" id="R-MMU-3000170">
    <property type="pathway name" value="Syndecan interactions"/>
</dbReference>
<dbReference type="Reactome" id="R-MMU-8941855">
    <property type="pathway name" value="RUNX3 regulates CDKN1A transcription"/>
</dbReference>
<dbReference type="Reactome" id="R-MMU-8941858">
    <property type="pathway name" value="Regulation of RUNX3 expression and activity"/>
</dbReference>
<dbReference type="Reactome" id="R-MMU-8951936">
    <property type="pathway name" value="RUNX3 regulates p14-ARF"/>
</dbReference>
<dbReference type="Reactome" id="R-MMU-9839389">
    <property type="pathway name" value="TGFBR3 regulates TGF-beta signaling"/>
</dbReference>
<dbReference type="BioGRID-ORCS" id="21803">
    <property type="hits" value="2 hits in 119 CRISPR screens"/>
</dbReference>
<dbReference type="PRO" id="PR:P04202"/>
<dbReference type="Proteomes" id="UP000000589">
    <property type="component" value="Chromosome 7"/>
</dbReference>
<dbReference type="RNAct" id="P04202">
    <property type="molecule type" value="protein"/>
</dbReference>
<dbReference type="Bgee" id="ENSMUSG00000002603">
    <property type="expression patterns" value="Expressed in molar tooth and 218 other cell types or tissues"/>
</dbReference>
<dbReference type="ExpressionAtlas" id="P04202">
    <property type="expression patterns" value="baseline and differential"/>
</dbReference>
<dbReference type="GO" id="GO:0030424">
    <property type="term" value="C:axon"/>
    <property type="evidence" value="ECO:0007669"/>
    <property type="project" value="Ensembl"/>
</dbReference>
<dbReference type="GO" id="GO:0072562">
    <property type="term" value="C:blood microparticle"/>
    <property type="evidence" value="ECO:0000250"/>
    <property type="project" value="AgBase"/>
</dbReference>
<dbReference type="GO" id="GO:0009986">
    <property type="term" value="C:cell surface"/>
    <property type="evidence" value="ECO:0000250"/>
    <property type="project" value="UniProtKB"/>
</dbReference>
<dbReference type="GO" id="GO:0005737">
    <property type="term" value="C:cytoplasm"/>
    <property type="evidence" value="ECO:0000314"/>
    <property type="project" value="MGI"/>
</dbReference>
<dbReference type="GO" id="GO:0031012">
    <property type="term" value="C:extracellular matrix"/>
    <property type="evidence" value="ECO:0000314"/>
    <property type="project" value="MGI"/>
</dbReference>
<dbReference type="GO" id="GO:0005615">
    <property type="term" value="C:extracellular space"/>
    <property type="evidence" value="ECO:0000314"/>
    <property type="project" value="BHF-UCL"/>
</dbReference>
<dbReference type="GO" id="GO:0005902">
    <property type="term" value="C:microvillus"/>
    <property type="evidence" value="ECO:0007669"/>
    <property type="project" value="Ensembl"/>
</dbReference>
<dbReference type="GO" id="GO:0043025">
    <property type="term" value="C:neuronal cell body"/>
    <property type="evidence" value="ECO:0007669"/>
    <property type="project" value="Ensembl"/>
</dbReference>
<dbReference type="GO" id="GO:0005634">
    <property type="term" value="C:nucleus"/>
    <property type="evidence" value="ECO:0000250"/>
    <property type="project" value="UniProtKB"/>
</dbReference>
<dbReference type="GO" id="GO:0030141">
    <property type="term" value="C:secretory granule"/>
    <property type="evidence" value="ECO:0007669"/>
    <property type="project" value="Ensembl"/>
</dbReference>
<dbReference type="GO" id="GO:0005125">
    <property type="term" value="F:cytokine activity"/>
    <property type="evidence" value="ECO:0007669"/>
    <property type="project" value="Ensembl"/>
</dbReference>
<dbReference type="GO" id="GO:0035800">
    <property type="term" value="F:deubiquitinase activator activity"/>
    <property type="evidence" value="ECO:0007669"/>
    <property type="project" value="Ensembl"/>
</dbReference>
<dbReference type="GO" id="GO:0019899">
    <property type="term" value="F:enzyme binding"/>
    <property type="evidence" value="ECO:0007669"/>
    <property type="project" value="Ensembl"/>
</dbReference>
<dbReference type="GO" id="GO:0008083">
    <property type="term" value="F:growth factor activity"/>
    <property type="evidence" value="ECO:0007669"/>
    <property type="project" value="UniProtKB-KW"/>
</dbReference>
<dbReference type="GO" id="GO:0042802">
    <property type="term" value="F:identical protein binding"/>
    <property type="evidence" value="ECO:0007669"/>
    <property type="project" value="Ensembl"/>
</dbReference>
<dbReference type="GO" id="GO:0043539">
    <property type="term" value="F:protein serine/threonine kinase activator activity"/>
    <property type="evidence" value="ECO:0000314"/>
    <property type="project" value="UniProtKB"/>
</dbReference>
<dbReference type="GO" id="GO:0044877">
    <property type="term" value="F:protein-containing complex binding"/>
    <property type="evidence" value="ECO:0007669"/>
    <property type="project" value="Ensembl"/>
</dbReference>
<dbReference type="GO" id="GO:0005160">
    <property type="term" value="F:transforming growth factor beta receptor binding"/>
    <property type="evidence" value="ECO:0000353"/>
    <property type="project" value="MGI"/>
</dbReference>
<dbReference type="GO" id="GO:0034713">
    <property type="term" value="F:type I transforming growth factor beta receptor binding"/>
    <property type="evidence" value="ECO:0000250"/>
    <property type="project" value="AgBase"/>
</dbReference>
<dbReference type="GO" id="GO:0005114">
    <property type="term" value="F:type II transforming growth factor beta receptor binding"/>
    <property type="evidence" value="ECO:0000250"/>
    <property type="project" value="UniProtKB"/>
</dbReference>
<dbReference type="GO" id="GO:0034714">
    <property type="term" value="F:type III transforming growth factor beta receptor binding"/>
    <property type="evidence" value="ECO:0000250"/>
    <property type="project" value="AgBase"/>
</dbReference>
<dbReference type="GO" id="GO:0002460">
    <property type="term" value="P:adaptive immune response based on somatic recombination of immune receptors built from immunoglobulin superfamily domains"/>
    <property type="evidence" value="ECO:0000314"/>
    <property type="project" value="BHF-UCL"/>
</dbReference>
<dbReference type="GO" id="GO:0009887">
    <property type="term" value="P:animal organ morphogenesis"/>
    <property type="evidence" value="ECO:0000304"/>
    <property type="project" value="MGI"/>
</dbReference>
<dbReference type="GO" id="GO:0003180">
    <property type="term" value="P:aortic valve morphogenesis"/>
    <property type="evidence" value="ECO:0000315"/>
    <property type="project" value="BHF-UCL"/>
</dbReference>
<dbReference type="GO" id="GO:0006754">
    <property type="term" value="P:ATP biosynthetic process"/>
    <property type="evidence" value="ECO:0000250"/>
    <property type="project" value="UniProtKB"/>
</dbReference>
<dbReference type="GO" id="GO:0060751">
    <property type="term" value="P:branch elongation involved in mammary gland duct branching"/>
    <property type="evidence" value="ECO:0000315"/>
    <property type="project" value="MGI"/>
</dbReference>
<dbReference type="GO" id="GO:0060435">
    <property type="term" value="P:bronchiole development"/>
    <property type="evidence" value="ECO:0000314"/>
    <property type="project" value="MGI"/>
</dbReference>
<dbReference type="GO" id="GO:0060070">
    <property type="term" value="P:canonical Wnt signaling pathway"/>
    <property type="evidence" value="ECO:0000314"/>
    <property type="project" value="MGI"/>
</dbReference>
<dbReference type="GO" id="GO:0002362">
    <property type="term" value="P:CD4-positive, CD25-positive, alpha-beta regulatory T cell lineage commitment"/>
    <property type="evidence" value="ECO:0000304"/>
    <property type="project" value="UniProtKB"/>
</dbReference>
<dbReference type="GO" id="GO:0001775">
    <property type="term" value="P:cell activation"/>
    <property type="evidence" value="ECO:0000314"/>
    <property type="project" value="MGI"/>
</dbReference>
<dbReference type="GO" id="GO:0000902">
    <property type="term" value="P:cell morphogenesis"/>
    <property type="evidence" value="ECO:0000314"/>
    <property type="project" value="MGI"/>
</dbReference>
<dbReference type="GO" id="GO:0008283">
    <property type="term" value="P:cell population proliferation"/>
    <property type="evidence" value="ECO:0000314"/>
    <property type="project" value="MGI"/>
</dbReference>
<dbReference type="GO" id="GO:0045216">
    <property type="term" value="P:cell-cell junction organization"/>
    <property type="evidence" value="ECO:0000250"/>
    <property type="project" value="UniProtKB"/>
</dbReference>
<dbReference type="GO" id="GO:1905641">
    <property type="term" value="P:cellular response to acetaldehyde"/>
    <property type="evidence" value="ECO:0007669"/>
    <property type="project" value="Ensembl"/>
</dbReference>
<dbReference type="GO" id="GO:0071549">
    <property type="term" value="P:cellular response to dexamethasone stimulus"/>
    <property type="evidence" value="ECO:0007669"/>
    <property type="project" value="Ensembl"/>
</dbReference>
<dbReference type="GO" id="GO:0071333">
    <property type="term" value="P:cellular response to glucose stimulus"/>
    <property type="evidence" value="ECO:0007669"/>
    <property type="project" value="Ensembl"/>
</dbReference>
<dbReference type="GO" id="GO:0071363">
    <property type="term" value="P:cellular response to growth factor stimulus"/>
    <property type="evidence" value="ECO:0000314"/>
    <property type="project" value="MGI"/>
</dbReference>
<dbReference type="GO" id="GO:0071456">
    <property type="term" value="P:cellular response to hypoxia"/>
    <property type="evidence" value="ECO:0007669"/>
    <property type="project" value="Ensembl"/>
</dbReference>
<dbReference type="GO" id="GO:1990314">
    <property type="term" value="P:cellular response to insulin-like growth factor stimulus"/>
    <property type="evidence" value="ECO:0007669"/>
    <property type="project" value="Ensembl"/>
</dbReference>
<dbReference type="GO" id="GO:0071479">
    <property type="term" value="P:cellular response to ionizing radiation"/>
    <property type="evidence" value="ECO:0000315"/>
    <property type="project" value="MGI"/>
</dbReference>
<dbReference type="GO" id="GO:0071404">
    <property type="term" value="P:cellular response to low-density lipoprotein particle stimulus"/>
    <property type="evidence" value="ECO:0007669"/>
    <property type="project" value="Ensembl"/>
</dbReference>
<dbReference type="GO" id="GO:0071260">
    <property type="term" value="P:cellular response to mechanical stimulus"/>
    <property type="evidence" value="ECO:0007669"/>
    <property type="project" value="Ensembl"/>
</dbReference>
<dbReference type="GO" id="GO:0071560">
    <property type="term" value="P:cellular response to transforming growth factor beta stimulus"/>
    <property type="evidence" value="ECO:0000314"/>
    <property type="project" value="MGI"/>
</dbReference>
<dbReference type="GO" id="GO:0098586">
    <property type="term" value="P:cellular response to virus"/>
    <property type="evidence" value="ECO:0000314"/>
    <property type="project" value="MGI"/>
</dbReference>
<dbReference type="GO" id="GO:0002062">
    <property type="term" value="P:chondrocyte differentiation"/>
    <property type="evidence" value="ECO:0000250"/>
    <property type="project" value="UniProtKB"/>
</dbReference>
<dbReference type="GO" id="GO:0002069">
    <property type="term" value="P:columnar/cuboidal epithelial cell maturation"/>
    <property type="evidence" value="ECO:0000315"/>
    <property type="project" value="MGI"/>
</dbReference>
<dbReference type="GO" id="GO:0061448">
    <property type="term" value="P:connective tissue development"/>
    <property type="evidence" value="ECO:0000316"/>
    <property type="project" value="MGI"/>
</dbReference>
<dbReference type="GO" id="GO:0006952">
    <property type="term" value="P:defense response"/>
    <property type="evidence" value="ECO:0000304"/>
    <property type="project" value="MGI"/>
</dbReference>
<dbReference type="GO" id="GO:0050832">
    <property type="term" value="P:defense response to fungus"/>
    <property type="evidence" value="ECO:0007669"/>
    <property type="project" value="Ensembl"/>
</dbReference>
<dbReference type="GO" id="GO:0048565">
    <property type="term" value="P:digestive tract development"/>
    <property type="evidence" value="ECO:0007669"/>
    <property type="project" value="Ensembl"/>
</dbReference>
<dbReference type="GO" id="GO:1990402">
    <property type="term" value="P:embryonic liver development"/>
    <property type="evidence" value="ECO:0000315"/>
    <property type="project" value="BHF-UCL"/>
</dbReference>
<dbReference type="GO" id="GO:0007492">
    <property type="term" value="P:endoderm development"/>
    <property type="evidence" value="ECO:0000314"/>
    <property type="project" value="MGI"/>
</dbReference>
<dbReference type="GO" id="GO:0050673">
    <property type="term" value="P:epithelial cell proliferation"/>
    <property type="evidence" value="ECO:0000314"/>
    <property type="project" value="MGI"/>
</dbReference>
<dbReference type="GO" id="GO:0001837">
    <property type="term" value="P:epithelial to mesenchymal transition"/>
    <property type="evidence" value="ECO:0000250"/>
    <property type="project" value="UniProtKB"/>
</dbReference>
<dbReference type="GO" id="GO:0085029">
    <property type="term" value="P:extracellular matrix assembly"/>
    <property type="evidence" value="ECO:0000314"/>
    <property type="project" value="BHF-UCL"/>
</dbReference>
<dbReference type="GO" id="GO:0097191">
    <property type="term" value="P:extrinsic apoptotic signaling pathway"/>
    <property type="evidence" value="ECO:0000250"/>
    <property type="project" value="UniProtKB"/>
</dbReference>
<dbReference type="GO" id="GO:0060325">
    <property type="term" value="P:face morphogenesis"/>
    <property type="evidence" value="ECO:0000270"/>
    <property type="project" value="UniProtKB"/>
</dbReference>
<dbReference type="GO" id="GO:0007565">
    <property type="term" value="P:female pregnancy"/>
    <property type="evidence" value="ECO:0007669"/>
    <property type="project" value="Ensembl"/>
</dbReference>
<dbReference type="GO" id="GO:0060364">
    <property type="term" value="P:frontal suture morphogenesis"/>
    <property type="evidence" value="ECO:0007669"/>
    <property type="project" value="Ensembl"/>
</dbReference>
<dbReference type="GO" id="GO:0010467">
    <property type="term" value="P:gene expression"/>
    <property type="evidence" value="ECO:0000314"/>
    <property type="project" value="MGI"/>
</dbReference>
<dbReference type="GO" id="GO:0008354">
    <property type="term" value="P:germ cell migration"/>
    <property type="evidence" value="ECO:0000314"/>
    <property type="project" value="MGI"/>
</dbReference>
<dbReference type="GO" id="GO:0007507">
    <property type="term" value="P:heart development"/>
    <property type="evidence" value="ECO:0000315"/>
    <property type="project" value="BHF-UCL"/>
</dbReference>
<dbReference type="GO" id="GO:0003179">
    <property type="term" value="P:heart valve morphogenesis"/>
    <property type="evidence" value="ECO:0000315"/>
    <property type="project" value="BHF-UCL"/>
</dbReference>
<dbReference type="GO" id="GO:0002244">
    <property type="term" value="P:hematopoietic progenitor cell differentiation"/>
    <property type="evidence" value="ECO:0000250"/>
    <property type="project" value="UniProtKB"/>
</dbReference>
<dbReference type="GO" id="GO:0030214">
    <property type="term" value="P:hyaluronan catabolic process"/>
    <property type="evidence" value="ECO:0000250"/>
    <property type="project" value="UniProtKB"/>
</dbReference>
<dbReference type="GO" id="GO:0006954">
    <property type="term" value="P:inflammatory response"/>
    <property type="evidence" value="ECO:0000315"/>
    <property type="project" value="MGI"/>
</dbReference>
<dbReference type="GO" id="GO:0048839">
    <property type="term" value="P:inner ear development"/>
    <property type="evidence" value="ECO:0007669"/>
    <property type="project" value="Ensembl"/>
</dbReference>
<dbReference type="GO" id="GO:0006874">
    <property type="term" value="P:intracellular calcium ion homeostasis"/>
    <property type="evidence" value="ECO:0000315"/>
    <property type="project" value="MGI"/>
</dbReference>
<dbReference type="GO" id="GO:0061520">
    <property type="term" value="P:Langerhans cell differentiation"/>
    <property type="evidence" value="ECO:0000315"/>
    <property type="project" value="MGI"/>
</dbReference>
<dbReference type="GO" id="GO:0070306">
    <property type="term" value="P:lens fiber cell differentiation"/>
    <property type="evidence" value="ECO:0000315"/>
    <property type="project" value="MGI"/>
</dbReference>
<dbReference type="GO" id="GO:0070661">
    <property type="term" value="P:leukocyte proliferation"/>
    <property type="evidence" value="ECO:0000304"/>
    <property type="project" value="MGI"/>
</dbReference>
<dbReference type="GO" id="GO:0097421">
    <property type="term" value="P:liver regeneration"/>
    <property type="evidence" value="ECO:0007669"/>
    <property type="project" value="Ensembl"/>
</dbReference>
<dbReference type="GO" id="GO:0048286">
    <property type="term" value="P:lung alveolus development"/>
    <property type="evidence" value="ECO:0000314"/>
    <property type="project" value="MGI"/>
</dbReference>
<dbReference type="GO" id="GO:0048535">
    <property type="term" value="P:lymph node development"/>
    <property type="evidence" value="ECO:0000315"/>
    <property type="project" value="MGI"/>
</dbReference>
<dbReference type="GO" id="GO:0060744">
    <property type="term" value="P:mammary gland branching involved in thelarche"/>
    <property type="evidence" value="ECO:0000315"/>
    <property type="project" value="MGI"/>
</dbReference>
<dbReference type="GO" id="GO:0030879">
    <property type="term" value="P:mammary gland development"/>
    <property type="evidence" value="ECO:0000314"/>
    <property type="project" value="MGI"/>
</dbReference>
<dbReference type="GO" id="GO:0031293">
    <property type="term" value="P:membrane protein intracellular domain proteolysis"/>
    <property type="evidence" value="ECO:0000250"/>
    <property type="project" value="UniProtKB"/>
</dbReference>
<dbReference type="GO" id="GO:0032943">
    <property type="term" value="P:mononuclear cell proliferation"/>
    <property type="evidence" value="ECO:0000315"/>
    <property type="project" value="MGI"/>
</dbReference>
<dbReference type="GO" id="GO:0046716">
    <property type="term" value="P:muscle cell cellular homeostasis"/>
    <property type="evidence" value="ECO:0000316"/>
    <property type="project" value="MGI"/>
</dbReference>
<dbReference type="GO" id="GO:0042552">
    <property type="term" value="P:myelination"/>
    <property type="evidence" value="ECO:0007669"/>
    <property type="project" value="Ensembl"/>
</dbReference>
<dbReference type="GO" id="GO:0070168">
    <property type="term" value="P:negative regulation of biomineral tissue development"/>
    <property type="evidence" value="ECO:0000315"/>
    <property type="project" value="BHF-UCL"/>
</dbReference>
<dbReference type="GO" id="GO:0043537">
    <property type="term" value="P:negative regulation of blood vessel endothelial cell migration"/>
    <property type="evidence" value="ECO:0000250"/>
    <property type="project" value="UniProtKB"/>
</dbReference>
<dbReference type="GO" id="GO:0045786">
    <property type="term" value="P:negative regulation of cell cycle"/>
    <property type="evidence" value="ECO:0000250"/>
    <property type="project" value="UniProtKB"/>
</dbReference>
<dbReference type="GO" id="GO:0030308">
    <property type="term" value="P:negative regulation of cell growth"/>
    <property type="evidence" value="ECO:0000314"/>
    <property type="project" value="BHF-UCL"/>
</dbReference>
<dbReference type="GO" id="GO:0008285">
    <property type="term" value="P:negative regulation of cell population proliferation"/>
    <property type="evidence" value="ECO:0000250"/>
    <property type="project" value="UniProtKB"/>
</dbReference>
<dbReference type="GO" id="GO:2000048">
    <property type="term" value="P:negative regulation of cell-cell adhesion mediated by cadherin"/>
    <property type="evidence" value="ECO:0000250"/>
    <property type="project" value="UniProtKB"/>
</dbReference>
<dbReference type="GO" id="GO:0045892">
    <property type="term" value="P:negative regulation of DNA-templated transcription"/>
    <property type="evidence" value="ECO:0000250"/>
    <property type="project" value="UniProtKB"/>
</dbReference>
<dbReference type="GO" id="GO:0050680">
    <property type="term" value="P:negative regulation of epithelial cell proliferation"/>
    <property type="evidence" value="ECO:0000250"/>
    <property type="project" value="UniProtKB"/>
</dbReference>
<dbReference type="GO" id="GO:0045599">
    <property type="term" value="P:negative regulation of fat cell differentiation"/>
    <property type="evidence" value="ECO:0000250"/>
    <property type="project" value="UniProtKB"/>
</dbReference>
<dbReference type="GO" id="GO:0010629">
    <property type="term" value="P:negative regulation of gene expression"/>
    <property type="evidence" value="ECO:0000315"/>
    <property type="project" value="BHF-UCL"/>
</dbReference>
<dbReference type="GO" id="GO:1900126">
    <property type="term" value="P:negative regulation of hyaluronan biosynthetic process"/>
    <property type="evidence" value="ECO:0000250"/>
    <property type="project" value="UniProtKB"/>
</dbReference>
<dbReference type="GO" id="GO:0032700">
    <property type="term" value="P:negative regulation of interleukin-17 production"/>
    <property type="evidence" value="ECO:0000314"/>
    <property type="project" value="UniProtKB"/>
</dbReference>
<dbReference type="GO" id="GO:0010936">
    <property type="term" value="P:negative regulation of macrophage cytokine production"/>
    <property type="evidence" value="ECO:0000250"/>
    <property type="project" value="AgBase"/>
</dbReference>
<dbReference type="GO" id="GO:1902894">
    <property type="term" value="P:negative regulation of miRNA transcription"/>
    <property type="evidence" value="ECO:0007669"/>
    <property type="project" value="Ensembl"/>
</dbReference>
<dbReference type="GO" id="GO:0045662">
    <property type="term" value="P:negative regulation of myoblast differentiation"/>
    <property type="evidence" value="ECO:0000250"/>
    <property type="project" value="UniProtKB"/>
</dbReference>
<dbReference type="GO" id="GO:0002859">
    <property type="term" value="P:negative regulation of natural killer cell mediated cytotoxicity directed against tumor cell target"/>
    <property type="evidence" value="ECO:0007669"/>
    <property type="project" value="Ensembl"/>
</dbReference>
<dbReference type="GO" id="GO:0007406">
    <property type="term" value="P:negative regulation of neuroblast proliferation"/>
    <property type="evidence" value="ECO:0007669"/>
    <property type="project" value="Ensembl"/>
</dbReference>
<dbReference type="GO" id="GO:0030279">
    <property type="term" value="P:negative regulation of ossification"/>
    <property type="evidence" value="ECO:0000314"/>
    <property type="project" value="MGI"/>
</dbReference>
<dbReference type="GO" id="GO:0050765">
    <property type="term" value="P:negative regulation of phagocytosis"/>
    <property type="evidence" value="ECO:0007669"/>
    <property type="project" value="Ensembl"/>
</dbReference>
<dbReference type="GO" id="GO:1903077">
    <property type="term" value="P:negative regulation of protein localization to plasma membrane"/>
    <property type="evidence" value="ECO:0007669"/>
    <property type="project" value="Ensembl"/>
</dbReference>
<dbReference type="GO" id="GO:0051280">
    <property type="term" value="P:negative regulation of release of sequestered calcium ion into cytosol"/>
    <property type="evidence" value="ECO:0007669"/>
    <property type="project" value="Ensembl"/>
</dbReference>
<dbReference type="GO" id="GO:0048642">
    <property type="term" value="P:negative regulation of skeletal muscle tissue development"/>
    <property type="evidence" value="ECO:0000250"/>
    <property type="project" value="UniProtKB"/>
</dbReference>
<dbReference type="GO" id="GO:0050868">
    <property type="term" value="P:negative regulation of T cell activation"/>
    <property type="evidence" value="ECO:0000315"/>
    <property type="project" value="MGI"/>
</dbReference>
<dbReference type="GO" id="GO:0042130">
    <property type="term" value="P:negative regulation of T cell proliferation"/>
    <property type="evidence" value="ECO:0000315"/>
    <property type="project" value="MGI"/>
</dbReference>
<dbReference type="GO" id="GO:0000122">
    <property type="term" value="P:negative regulation of transcription by RNA polymerase II"/>
    <property type="evidence" value="ECO:0000314"/>
    <property type="project" value="MGI"/>
</dbReference>
<dbReference type="GO" id="GO:0001843">
    <property type="term" value="P:neural tube closure"/>
    <property type="evidence" value="ECO:0000315"/>
    <property type="project" value="BHF-UCL"/>
</dbReference>
<dbReference type="GO" id="GO:0021915">
    <property type="term" value="P:neural tube development"/>
    <property type="evidence" value="ECO:0000315"/>
    <property type="project" value="BHF-UCL"/>
</dbReference>
<dbReference type="GO" id="GO:0051402">
    <property type="term" value="P:neuron apoptotic process"/>
    <property type="evidence" value="ECO:0000314"/>
    <property type="project" value="MGI"/>
</dbReference>
<dbReference type="GO" id="GO:0007219">
    <property type="term" value="P:Notch signaling pathway"/>
    <property type="evidence" value="ECO:0000314"/>
    <property type="project" value="MGI"/>
</dbReference>
<dbReference type="GO" id="GO:0071895">
    <property type="term" value="P:odontoblast differentiation"/>
    <property type="evidence" value="ECO:0000315"/>
    <property type="project" value="UniProtKB"/>
</dbReference>
<dbReference type="GO" id="GO:0042475">
    <property type="term" value="P:odontogenesis of dentin-containing tooth"/>
    <property type="evidence" value="ECO:0007669"/>
    <property type="project" value="Ensembl"/>
</dbReference>
<dbReference type="GO" id="GO:0014003">
    <property type="term" value="P:oligodendrocyte development"/>
    <property type="evidence" value="ECO:0000315"/>
    <property type="project" value="CACAO"/>
</dbReference>
<dbReference type="GO" id="GO:0030316">
    <property type="term" value="P:osteoclast differentiation"/>
    <property type="evidence" value="ECO:0000314"/>
    <property type="project" value="MGI"/>
</dbReference>
<dbReference type="GO" id="GO:0006796">
    <property type="term" value="P:phosphate-containing compound metabolic process"/>
    <property type="evidence" value="ECO:0000250"/>
    <property type="project" value="UniProtKB"/>
</dbReference>
<dbReference type="GO" id="GO:0055091">
    <property type="term" value="P:phospholipid homeostasis"/>
    <property type="evidence" value="ECO:0000314"/>
    <property type="project" value="MGI"/>
</dbReference>
<dbReference type="GO" id="GO:0043536">
    <property type="term" value="P:positive regulation of blood vessel endothelial cell migration"/>
    <property type="evidence" value="ECO:0000250"/>
    <property type="project" value="UniProtKB"/>
</dbReference>
<dbReference type="GO" id="GO:0090190">
    <property type="term" value="P:positive regulation of branching involved in ureteric bud morphogenesis"/>
    <property type="evidence" value="ECO:0007669"/>
    <property type="project" value="Ensembl"/>
</dbReference>
<dbReference type="GO" id="GO:0043123">
    <property type="term" value="P:positive regulation of canonical NF-kappaB signal transduction"/>
    <property type="evidence" value="ECO:0007669"/>
    <property type="project" value="Ensembl"/>
</dbReference>
<dbReference type="GO" id="GO:0090263">
    <property type="term" value="P:positive regulation of canonical Wnt signaling pathway"/>
    <property type="evidence" value="ECO:0007669"/>
    <property type="project" value="Ensembl"/>
</dbReference>
<dbReference type="GO" id="GO:2000727">
    <property type="term" value="P:positive regulation of cardiac muscle cell differentiation"/>
    <property type="evidence" value="ECO:0007669"/>
    <property type="project" value="Ensembl"/>
</dbReference>
<dbReference type="GO" id="GO:0051781">
    <property type="term" value="P:positive regulation of cell division"/>
    <property type="evidence" value="ECO:0007669"/>
    <property type="project" value="UniProtKB-KW"/>
</dbReference>
<dbReference type="GO" id="GO:0030335">
    <property type="term" value="P:positive regulation of cell migration"/>
    <property type="evidence" value="ECO:0000250"/>
    <property type="project" value="UniProtKB"/>
</dbReference>
<dbReference type="GO" id="GO:2000343">
    <property type="term" value="P:positive regulation of chemokine (C-X-C motif) ligand 2 production"/>
    <property type="evidence" value="ECO:0007669"/>
    <property type="project" value="Ensembl"/>
</dbReference>
<dbReference type="GO" id="GO:0050921">
    <property type="term" value="P:positive regulation of chemotaxis"/>
    <property type="evidence" value="ECO:0000250"/>
    <property type="project" value="UniProtKB"/>
</dbReference>
<dbReference type="GO" id="GO:0032967">
    <property type="term" value="P:positive regulation of collagen biosynthetic process"/>
    <property type="evidence" value="ECO:0000314"/>
    <property type="project" value="BHF-UCL"/>
</dbReference>
<dbReference type="GO" id="GO:0045893">
    <property type="term" value="P:positive regulation of DNA-templated transcription"/>
    <property type="evidence" value="ECO:0000314"/>
    <property type="project" value="MGI"/>
</dbReference>
<dbReference type="GO" id="GO:2000353">
    <property type="term" value="P:positive regulation of endothelial cell apoptotic process"/>
    <property type="evidence" value="ECO:0007669"/>
    <property type="project" value="Ensembl"/>
</dbReference>
<dbReference type="GO" id="GO:0045742">
    <property type="term" value="P:positive regulation of epidermal growth factor receptor signaling pathway"/>
    <property type="evidence" value="ECO:0000250"/>
    <property type="project" value="UniProtKB"/>
</dbReference>
<dbReference type="GO" id="GO:0050679">
    <property type="term" value="P:positive regulation of epithelial cell proliferation"/>
    <property type="evidence" value="ECO:0007669"/>
    <property type="project" value="Ensembl"/>
</dbReference>
<dbReference type="GO" id="GO:0010718">
    <property type="term" value="P:positive regulation of epithelial to mesenchymal transition"/>
    <property type="evidence" value="ECO:0000314"/>
    <property type="project" value="MGI"/>
</dbReference>
<dbReference type="GO" id="GO:0070374">
    <property type="term" value="P:positive regulation of ERK1 and ERK2 cascade"/>
    <property type="evidence" value="ECO:0000250"/>
    <property type="project" value="UniProtKB"/>
</dbReference>
<dbReference type="GO" id="GO:0031536">
    <property type="term" value="P:positive regulation of exit from mitosis"/>
    <property type="evidence" value="ECO:0007669"/>
    <property type="project" value="Ensembl"/>
</dbReference>
<dbReference type="GO" id="GO:1901203">
    <property type="term" value="P:positive regulation of extracellular matrix assembly"/>
    <property type="evidence" value="ECO:0000314"/>
    <property type="project" value="BHF-UCL"/>
</dbReference>
<dbReference type="GO" id="GO:0010763">
    <property type="term" value="P:positive regulation of fibroblast migration"/>
    <property type="evidence" value="ECO:0000315"/>
    <property type="project" value="MGI"/>
</dbReference>
<dbReference type="GO" id="GO:0048146">
    <property type="term" value="P:positive regulation of fibroblast proliferation"/>
    <property type="evidence" value="ECO:0000314"/>
    <property type="project" value="MGI"/>
</dbReference>
<dbReference type="GO" id="GO:0010628">
    <property type="term" value="P:positive regulation of gene expression"/>
    <property type="evidence" value="ECO:0000314"/>
    <property type="project" value="UniProtKB"/>
</dbReference>
<dbReference type="GO" id="GO:0050729">
    <property type="term" value="P:positive regulation of inflammatory response"/>
    <property type="evidence" value="ECO:0007669"/>
    <property type="project" value="Ensembl"/>
</dbReference>
<dbReference type="GO" id="GO:0032740">
    <property type="term" value="P:positive regulation of interleukin-17 production"/>
    <property type="evidence" value="ECO:0000314"/>
    <property type="project" value="BHF-UCL"/>
</dbReference>
<dbReference type="GO" id="GO:0032755">
    <property type="term" value="P:positive regulation of interleukin-6 production"/>
    <property type="evidence" value="ECO:0007669"/>
    <property type="project" value="Ensembl"/>
</dbReference>
<dbReference type="GO" id="GO:0048298">
    <property type="term" value="P:positive regulation of isotype switching to IgA isotypes"/>
    <property type="evidence" value="ECO:0000250"/>
    <property type="project" value="AgBase"/>
</dbReference>
<dbReference type="GO" id="GO:1902462">
    <property type="term" value="P:positive regulation of mesenchymal stem cell proliferation"/>
    <property type="evidence" value="ECO:0007669"/>
    <property type="project" value="Ensembl"/>
</dbReference>
<dbReference type="GO" id="GO:0014008">
    <property type="term" value="P:positive regulation of microglia differentiation"/>
    <property type="evidence" value="ECO:0000315"/>
    <property type="project" value="UniProtKB"/>
</dbReference>
<dbReference type="GO" id="GO:1902895">
    <property type="term" value="P:positive regulation of miRNA transcription"/>
    <property type="evidence" value="ECO:0007669"/>
    <property type="project" value="Ensembl"/>
</dbReference>
<dbReference type="GO" id="GO:0071677">
    <property type="term" value="P:positive regulation of mononuclear cell migration"/>
    <property type="evidence" value="ECO:0007669"/>
    <property type="project" value="Ensembl"/>
</dbReference>
<dbReference type="GO" id="GO:0042482">
    <property type="term" value="P:positive regulation of odontogenesis"/>
    <property type="evidence" value="ECO:0000314"/>
    <property type="project" value="MGI"/>
</dbReference>
<dbReference type="GO" id="GO:0051897">
    <property type="term" value="P:positive regulation of phosphatidylinositol 3-kinase/protein kinase B signal transduction"/>
    <property type="evidence" value="ECO:0007669"/>
    <property type="project" value="Ensembl"/>
</dbReference>
<dbReference type="GO" id="GO:2000636">
    <property type="term" value="P:positive regulation of primary miRNA processing"/>
    <property type="evidence" value="ECO:0007669"/>
    <property type="project" value="Ensembl"/>
</dbReference>
<dbReference type="GO" id="GO:0042307">
    <property type="term" value="P:positive regulation of protein import into nucleus"/>
    <property type="evidence" value="ECO:0000250"/>
    <property type="project" value="AgBase"/>
</dbReference>
<dbReference type="GO" id="GO:1900182">
    <property type="term" value="P:positive regulation of protein localization to nucleus"/>
    <property type="evidence" value="ECO:0000316"/>
    <property type="project" value="MGI"/>
</dbReference>
<dbReference type="GO" id="GO:0051247">
    <property type="term" value="P:positive regulation of protein metabolic process"/>
    <property type="evidence" value="ECO:0000250"/>
    <property type="project" value="UniProtKB"/>
</dbReference>
<dbReference type="GO" id="GO:0050714">
    <property type="term" value="P:positive regulation of protein secretion"/>
    <property type="evidence" value="ECO:0000250"/>
    <property type="project" value="UniProtKB"/>
</dbReference>
<dbReference type="GO" id="GO:0031334">
    <property type="term" value="P:positive regulation of protein-containing complex assembly"/>
    <property type="evidence" value="ECO:0000250"/>
    <property type="project" value="UniProtKB"/>
</dbReference>
<dbReference type="GO" id="GO:1904894">
    <property type="term" value="P:positive regulation of receptor signaling pathway via STAT"/>
    <property type="evidence" value="ECO:0007669"/>
    <property type="project" value="Ensembl"/>
</dbReference>
<dbReference type="GO" id="GO:0045591">
    <property type="term" value="P:positive regulation of regulatory T cell differentiation"/>
    <property type="evidence" value="ECO:0000315"/>
    <property type="project" value="UniProtKB"/>
</dbReference>
<dbReference type="GO" id="GO:0060391">
    <property type="term" value="P:positive regulation of SMAD protein signal transduction"/>
    <property type="evidence" value="ECO:0000314"/>
    <property type="project" value="BHF-UCL"/>
</dbReference>
<dbReference type="GO" id="GO:0051152">
    <property type="term" value="P:positive regulation of smooth muscle cell differentiation"/>
    <property type="evidence" value="ECO:0000266"/>
    <property type="project" value="MGI"/>
</dbReference>
<dbReference type="GO" id="GO:0048661">
    <property type="term" value="P:positive regulation of smooth muscle cell proliferation"/>
    <property type="evidence" value="ECO:0007669"/>
    <property type="project" value="Ensembl"/>
</dbReference>
<dbReference type="GO" id="GO:2000648">
    <property type="term" value="P:positive regulation of stem cell proliferation"/>
    <property type="evidence" value="ECO:0000314"/>
    <property type="project" value="MGI"/>
</dbReference>
<dbReference type="GO" id="GO:0032930">
    <property type="term" value="P:positive regulation of superoxide anion generation"/>
    <property type="evidence" value="ECO:0000250"/>
    <property type="project" value="UniProtKB"/>
</dbReference>
<dbReference type="GO" id="GO:0045944">
    <property type="term" value="P:positive regulation of transcription by RNA polymerase II"/>
    <property type="evidence" value="ECO:0000314"/>
    <property type="project" value="MGI"/>
</dbReference>
<dbReference type="GO" id="GO:0032760">
    <property type="term" value="P:positive regulation of tumor necrosis factor production"/>
    <property type="evidence" value="ECO:0007669"/>
    <property type="project" value="Ensembl"/>
</dbReference>
<dbReference type="GO" id="GO:0043117">
    <property type="term" value="P:positive regulation of vascular permeability"/>
    <property type="evidence" value="ECO:0007669"/>
    <property type="project" value="Ensembl"/>
</dbReference>
<dbReference type="GO" id="GO:1904018">
    <property type="term" value="P:positive regulation of vasculature development"/>
    <property type="evidence" value="ECO:0007669"/>
    <property type="project" value="Ensembl"/>
</dbReference>
<dbReference type="GO" id="GO:0006611">
    <property type="term" value="P:protein export from nucleus"/>
    <property type="evidence" value="ECO:0007669"/>
    <property type="project" value="Ensembl"/>
</dbReference>
<dbReference type="GO" id="GO:0032801">
    <property type="term" value="P:receptor catabolic process"/>
    <property type="evidence" value="ECO:0000250"/>
    <property type="project" value="UniProtKB"/>
</dbReference>
<dbReference type="GO" id="GO:0032956">
    <property type="term" value="P:regulation of actin cytoskeleton organization"/>
    <property type="evidence" value="ECO:0000316"/>
    <property type="project" value="MGI"/>
</dbReference>
<dbReference type="GO" id="GO:0060762">
    <property type="term" value="P:regulation of branching involved in mammary gland duct morphogenesis"/>
    <property type="evidence" value="ECO:0000316"/>
    <property type="project" value="MGI"/>
</dbReference>
<dbReference type="GO" id="GO:0061035">
    <property type="term" value="P:regulation of cartilage development"/>
    <property type="evidence" value="ECO:0000314"/>
    <property type="project" value="MGI"/>
</dbReference>
<dbReference type="GO" id="GO:0032829">
    <property type="term" value="P:regulation of CD4-positive, CD25-positive, alpha-beta regulatory T cell differentiation"/>
    <property type="evidence" value="ECO:0000304"/>
    <property type="project" value="UniProtKB"/>
</dbReference>
<dbReference type="GO" id="GO:0051726">
    <property type="term" value="P:regulation of cell cycle"/>
    <property type="evidence" value="ECO:0000314"/>
    <property type="project" value="MGI"/>
</dbReference>
<dbReference type="GO" id="GO:0042127">
    <property type="term" value="P:regulation of cell population proliferation"/>
    <property type="evidence" value="ECO:0000314"/>
    <property type="project" value="MGI"/>
</dbReference>
<dbReference type="GO" id="GO:0070173">
    <property type="term" value="P:regulation of enamel mineralization"/>
    <property type="evidence" value="ECO:0000315"/>
    <property type="project" value="MGI"/>
</dbReference>
<dbReference type="GO" id="GO:0010468">
    <property type="term" value="P:regulation of gene expression"/>
    <property type="evidence" value="ECO:0000314"/>
    <property type="project" value="MGI"/>
</dbReference>
<dbReference type="GO" id="GO:0032667">
    <property type="term" value="P:regulation of interleukin-23 production"/>
    <property type="evidence" value="ECO:0000314"/>
    <property type="project" value="UniProtKB"/>
</dbReference>
<dbReference type="GO" id="GO:0042306">
    <property type="term" value="P:regulation of protein import into nucleus"/>
    <property type="evidence" value="ECO:0000314"/>
    <property type="project" value="MGI"/>
</dbReference>
<dbReference type="GO" id="GO:0045589">
    <property type="term" value="P:regulation of regulatory T cell differentiation"/>
    <property type="evidence" value="ECO:0000316"/>
    <property type="project" value="MGI"/>
</dbReference>
<dbReference type="GO" id="GO:0002028">
    <property type="term" value="P:regulation of sodium ion transport"/>
    <property type="evidence" value="ECO:0000314"/>
    <property type="project" value="MGI"/>
</dbReference>
<dbReference type="GO" id="GO:0016202">
    <property type="term" value="P:regulation of striated muscle tissue development"/>
    <property type="evidence" value="ECO:0000314"/>
    <property type="project" value="MGI"/>
</dbReference>
<dbReference type="GO" id="GO:0045066">
    <property type="term" value="P:regulatory T cell differentiation"/>
    <property type="evidence" value="ECO:0000314"/>
    <property type="project" value="MGI"/>
</dbReference>
<dbReference type="GO" id="GO:0070723">
    <property type="term" value="P:response to cholesterol"/>
    <property type="evidence" value="ECO:0000250"/>
    <property type="project" value="UniProtKB"/>
</dbReference>
<dbReference type="GO" id="GO:0032355">
    <property type="term" value="P:response to estradiol"/>
    <property type="evidence" value="ECO:0000250"/>
    <property type="project" value="UniProtKB"/>
</dbReference>
<dbReference type="GO" id="GO:0045471">
    <property type="term" value="P:response to ethanol"/>
    <property type="evidence" value="ECO:0007669"/>
    <property type="project" value="Ensembl"/>
</dbReference>
<dbReference type="GO" id="GO:0035902">
    <property type="term" value="P:response to immobilization stress"/>
    <property type="evidence" value="ECO:0007669"/>
    <property type="project" value="Ensembl"/>
</dbReference>
<dbReference type="GO" id="GO:0034616">
    <property type="term" value="P:response to laminar fluid shear stress"/>
    <property type="evidence" value="ECO:0007669"/>
    <property type="project" value="Ensembl"/>
</dbReference>
<dbReference type="GO" id="GO:0032570">
    <property type="term" value="P:response to progesterone"/>
    <property type="evidence" value="ECO:0000250"/>
    <property type="project" value="UniProtKB"/>
</dbReference>
<dbReference type="GO" id="GO:1902074">
    <property type="term" value="P:response to salt"/>
    <property type="evidence" value="ECO:0007669"/>
    <property type="project" value="Ensembl"/>
</dbReference>
<dbReference type="GO" id="GO:0033280">
    <property type="term" value="P:response to vitamin D"/>
    <property type="evidence" value="ECO:0007669"/>
    <property type="project" value="Ensembl"/>
</dbReference>
<dbReference type="GO" id="GO:0009611">
    <property type="term" value="P:response to wounding"/>
    <property type="evidence" value="ECO:0000250"/>
    <property type="project" value="AgBase"/>
</dbReference>
<dbReference type="GO" id="GO:0009410">
    <property type="term" value="P:response to xenobiotic stimulus"/>
    <property type="evidence" value="ECO:0007669"/>
    <property type="project" value="Ensembl"/>
</dbReference>
<dbReference type="GO" id="GO:0061298">
    <property type="term" value="P:retina vasculature development in camera-type eye"/>
    <property type="evidence" value="ECO:0000314"/>
    <property type="project" value="MGI"/>
</dbReference>
<dbReference type="GO" id="GO:0007435">
    <property type="term" value="P:salivary gland morphogenesis"/>
    <property type="evidence" value="ECO:0000250"/>
    <property type="project" value="AgBase"/>
</dbReference>
<dbReference type="GO" id="GO:0007519">
    <property type="term" value="P:skeletal muscle tissue development"/>
    <property type="evidence" value="ECO:0000304"/>
    <property type="project" value="MGI"/>
</dbReference>
<dbReference type="GO" id="GO:0001501">
    <property type="term" value="P:skeletal system development"/>
    <property type="evidence" value="ECO:0000304"/>
    <property type="project" value="MGI"/>
</dbReference>
<dbReference type="GO" id="GO:0002040">
    <property type="term" value="P:sprouting angiogenesis"/>
    <property type="evidence" value="ECO:0007669"/>
    <property type="project" value="Ensembl"/>
</dbReference>
<dbReference type="GO" id="GO:0072089">
    <property type="term" value="P:stem cell proliferation"/>
    <property type="evidence" value="ECO:0000314"/>
    <property type="project" value="MGI"/>
</dbReference>
<dbReference type="GO" id="GO:0043129">
    <property type="term" value="P:surfactant homeostasis"/>
    <property type="evidence" value="ECO:0000314"/>
    <property type="project" value="MGI"/>
</dbReference>
<dbReference type="GO" id="GO:0042110">
    <property type="term" value="P:T cell activation"/>
    <property type="evidence" value="ECO:0000314"/>
    <property type="project" value="MGI"/>
</dbReference>
<dbReference type="GO" id="GO:0030217">
    <property type="term" value="P:T cell differentiation"/>
    <property type="evidence" value="ECO:0000315"/>
    <property type="project" value="MGI"/>
</dbReference>
<dbReference type="GO" id="GO:0043029">
    <property type="term" value="P:T cell homeostasis"/>
    <property type="evidence" value="ECO:0000315"/>
    <property type="project" value="MGI"/>
</dbReference>
<dbReference type="GO" id="GO:0042098">
    <property type="term" value="P:T cell proliferation"/>
    <property type="evidence" value="ECO:0000315"/>
    <property type="project" value="MGI"/>
</dbReference>
<dbReference type="GO" id="GO:0072540">
    <property type="term" value="P:T-helper 17 cell lineage commitment"/>
    <property type="evidence" value="ECO:0000304"/>
    <property type="project" value="UniProtKB"/>
</dbReference>
<dbReference type="GO" id="GO:0002513">
    <property type="term" value="P:tolerance induction to self antigen"/>
    <property type="evidence" value="ECO:0000315"/>
    <property type="project" value="MGI"/>
</dbReference>
<dbReference type="GO" id="GO:0007179">
    <property type="term" value="P:transforming growth factor beta receptor signaling pathway"/>
    <property type="evidence" value="ECO:0000314"/>
    <property type="project" value="BHF-UCL"/>
</dbReference>
<dbReference type="GO" id="GO:0001657">
    <property type="term" value="P:ureteric bud development"/>
    <property type="evidence" value="ECO:0000270"/>
    <property type="project" value="UniProtKB"/>
</dbReference>
<dbReference type="GO" id="GO:0001570">
    <property type="term" value="P:vasculogenesis"/>
    <property type="evidence" value="ECO:0000315"/>
    <property type="project" value="BHF-UCL"/>
</dbReference>
<dbReference type="GO" id="GO:0055010">
    <property type="term" value="P:ventricular cardiac muscle tissue morphogenesis"/>
    <property type="evidence" value="ECO:0000315"/>
    <property type="project" value="BHF-UCL"/>
</dbReference>
<dbReference type="CDD" id="cd19384">
    <property type="entry name" value="TGF_beta_TGFB1"/>
    <property type="match status" value="1"/>
</dbReference>
<dbReference type="FunFam" id="2.10.90.10:FF:000004">
    <property type="entry name" value="Transforming growth factor beta"/>
    <property type="match status" value="1"/>
</dbReference>
<dbReference type="FunFam" id="2.60.120.970:FF:000010">
    <property type="entry name" value="Transforming growth factor beta"/>
    <property type="match status" value="1"/>
</dbReference>
<dbReference type="Gene3D" id="2.60.120.970">
    <property type="match status" value="1"/>
</dbReference>
<dbReference type="Gene3D" id="2.10.90.10">
    <property type="entry name" value="Cystine-knot cytokines"/>
    <property type="match status" value="1"/>
</dbReference>
<dbReference type="InterPro" id="IPR029034">
    <property type="entry name" value="Cystine-knot_cytokine"/>
</dbReference>
<dbReference type="InterPro" id="IPR001839">
    <property type="entry name" value="TGF-b_C"/>
</dbReference>
<dbReference type="InterPro" id="IPR001111">
    <property type="entry name" value="TGF-b_propeptide"/>
</dbReference>
<dbReference type="InterPro" id="IPR016319">
    <property type="entry name" value="TGF-beta"/>
</dbReference>
<dbReference type="InterPro" id="IPR015615">
    <property type="entry name" value="TGF-beta-rel"/>
</dbReference>
<dbReference type="InterPro" id="IPR003939">
    <property type="entry name" value="TGFb1"/>
</dbReference>
<dbReference type="InterPro" id="IPR017948">
    <property type="entry name" value="TGFb_CS"/>
</dbReference>
<dbReference type="PANTHER" id="PTHR11848">
    <property type="entry name" value="TGF-BETA FAMILY"/>
    <property type="match status" value="1"/>
</dbReference>
<dbReference type="PANTHER" id="PTHR11848:SF125">
    <property type="entry name" value="TRANSFORMING GROWTH FACTOR BETA-1 PROPROTEIN"/>
    <property type="match status" value="1"/>
</dbReference>
<dbReference type="Pfam" id="PF00019">
    <property type="entry name" value="TGF_beta"/>
    <property type="match status" value="1"/>
</dbReference>
<dbReference type="Pfam" id="PF00688">
    <property type="entry name" value="TGFb_propeptide"/>
    <property type="match status" value="1"/>
</dbReference>
<dbReference type="PIRSF" id="PIRSF001787">
    <property type="entry name" value="TGF-beta"/>
    <property type="match status" value="1"/>
</dbReference>
<dbReference type="PRINTS" id="PR01423">
    <property type="entry name" value="TGFBETA"/>
</dbReference>
<dbReference type="PRINTS" id="PR01424">
    <property type="entry name" value="TGFBETA1"/>
</dbReference>
<dbReference type="SMART" id="SM00204">
    <property type="entry name" value="TGFB"/>
    <property type="match status" value="1"/>
</dbReference>
<dbReference type="SUPFAM" id="SSF57501">
    <property type="entry name" value="Cystine-knot cytokines"/>
    <property type="match status" value="1"/>
</dbReference>
<dbReference type="PROSITE" id="PS00250">
    <property type="entry name" value="TGF_BETA_1"/>
    <property type="match status" value="1"/>
</dbReference>
<dbReference type="PROSITE" id="PS51362">
    <property type="entry name" value="TGF_BETA_2"/>
    <property type="match status" value="1"/>
</dbReference>
<accession>P04202</accession>
<gene>
    <name evidence="17" type="primary">Tgfb1</name>
</gene>
<keyword id="KW-0165">Cleavage on pair of basic residues</keyword>
<keyword id="KW-1015">Disulfide bond</keyword>
<keyword id="KW-0272">Extracellular matrix</keyword>
<keyword id="KW-0325">Glycoprotein</keyword>
<keyword id="KW-0339">Growth factor</keyword>
<keyword id="KW-0497">Mitogen</keyword>
<keyword id="KW-1185">Reference proteome</keyword>
<keyword id="KW-0964">Secreted</keyword>
<keyword id="KW-0732">Signal</keyword>
<organism>
    <name type="scientific">Mus musculus</name>
    <name type="common">Mouse</name>
    <dbReference type="NCBI Taxonomy" id="10090"/>
    <lineage>
        <taxon>Eukaryota</taxon>
        <taxon>Metazoa</taxon>
        <taxon>Chordata</taxon>
        <taxon>Craniata</taxon>
        <taxon>Vertebrata</taxon>
        <taxon>Euteleostomi</taxon>
        <taxon>Mammalia</taxon>
        <taxon>Eutheria</taxon>
        <taxon>Euarchontoglires</taxon>
        <taxon>Glires</taxon>
        <taxon>Rodentia</taxon>
        <taxon>Myomorpha</taxon>
        <taxon>Muroidea</taxon>
        <taxon>Muridae</taxon>
        <taxon>Murinae</taxon>
        <taxon>Mus</taxon>
        <taxon>Mus</taxon>
    </lineage>
</organism>